<protein>
    <recommendedName>
        <fullName>Probable serine/threonine-protein kinase fhkA</fullName>
        <ecNumber>2.7.11.1</ecNumber>
    </recommendedName>
    <alternativeName>
        <fullName>Forkhead-associated kinase protein A</fullName>
    </alternativeName>
</protein>
<sequence>MSQTNYIPSTPNKSTPPSELSSTPIDENDIGLLVSLNQEISSNIHVKIKIEENITIGRSKTCNIVVPELIVSGKHCIITRADAIENGNTNYGLLMIQDQSTNGTFINGKLIGKGKSRLLKNGDKLCLGKSTKEIDISFLYKSNYSNQLLLSSSTNNLNNSGTAQYIWERKDIKDDILKDYDFIKELGSGNFSVVYEGVNKNTGKRVAIKHLNLSKINTHTPKFKSQLNREIEILKFINHENVVEIYDIFYTKDQQLFFILELANGGELYNKIGFNEPLLNENQSKFIFKQILNAVSYLHSKGIAHRDLKPENILFDSYGDDYLKIKITDFGLARFIHEGELAKTLCGSPLYVAPEVILSLHHKNKYGTNSSSSSQSPTKDINSVGYGKSCDAWSLGAILYIVLCGTPPFDDDDDEEMSTPQLFEKIVSGNYRVEKLEKSLISSSAADLVKGLLTVDPDKRLTVEQALNHPWITEINNNSNNNNNNINNNSSNINIIKKSPLKTVNTNNNNNNCKLSSPIKNSSKLKRNLSNEPLNNNISNNNNTQTSFTGSLLNQLQLNEGELLKKRKTFLSNNDQKENINPVINNPFLKSSQ</sequence>
<organism>
    <name type="scientific">Dictyostelium discoideum</name>
    <name type="common">Social amoeba</name>
    <dbReference type="NCBI Taxonomy" id="44689"/>
    <lineage>
        <taxon>Eukaryota</taxon>
        <taxon>Amoebozoa</taxon>
        <taxon>Evosea</taxon>
        <taxon>Eumycetozoa</taxon>
        <taxon>Dictyostelia</taxon>
        <taxon>Dictyosteliales</taxon>
        <taxon>Dictyosteliaceae</taxon>
        <taxon>Dictyostelium</taxon>
    </lineage>
</organism>
<keyword id="KW-0067">ATP-binding</keyword>
<keyword id="KW-0418">Kinase</keyword>
<keyword id="KW-0547">Nucleotide-binding</keyword>
<keyword id="KW-1185">Reference proteome</keyword>
<keyword id="KW-0723">Serine/threonine-protein kinase</keyword>
<keyword id="KW-0808">Transferase</keyword>
<accession>Q54BF0</accession>
<name>FHKA_DICDI</name>
<dbReference type="EC" id="2.7.11.1"/>
<dbReference type="EMBL" id="AAFI02000218">
    <property type="protein sequence ID" value="EAL60640.1"/>
    <property type="molecule type" value="Genomic_DNA"/>
</dbReference>
<dbReference type="RefSeq" id="XP_629079.1">
    <property type="nucleotide sequence ID" value="XM_629077.1"/>
</dbReference>
<dbReference type="SMR" id="Q54BF0"/>
<dbReference type="FunCoup" id="Q54BF0">
    <property type="interactions" value="88"/>
</dbReference>
<dbReference type="STRING" id="44689.Q54BF0"/>
<dbReference type="TCDB" id="1.I.1.1.5">
    <property type="family name" value="the nuclear pore complex (npc) family"/>
</dbReference>
<dbReference type="PaxDb" id="44689-DDB0216370"/>
<dbReference type="EnsemblProtists" id="EAL60640">
    <property type="protein sequence ID" value="EAL60640"/>
    <property type="gene ID" value="DDB_G0293656"/>
</dbReference>
<dbReference type="GeneID" id="8629371"/>
<dbReference type="KEGG" id="ddi:DDB_G0293656"/>
<dbReference type="dictyBase" id="DDB_G0293656">
    <property type="gene designation" value="fhkA"/>
</dbReference>
<dbReference type="VEuPathDB" id="AmoebaDB:DDB_G0293656"/>
<dbReference type="eggNOG" id="KOG0615">
    <property type="taxonomic scope" value="Eukaryota"/>
</dbReference>
<dbReference type="HOGENOM" id="CLU_000288_63_47_1"/>
<dbReference type="InParanoid" id="Q54BF0"/>
<dbReference type="OMA" id="FVHDNSF"/>
<dbReference type="PhylomeDB" id="Q54BF0"/>
<dbReference type="Reactome" id="R-DDI-111932">
    <property type="pathway name" value="CaMK IV-mediated phosphorylation of CREB"/>
</dbReference>
<dbReference type="Reactome" id="R-DDI-442729">
    <property type="pathway name" value="CREB1 phosphorylation through the activation of CaMKII/CaMKK/CaMKIV cascasde"/>
</dbReference>
<dbReference type="PRO" id="PR:Q54BF0"/>
<dbReference type="Proteomes" id="UP000002195">
    <property type="component" value="Chromosome 6"/>
</dbReference>
<dbReference type="GO" id="GO:0005737">
    <property type="term" value="C:cytoplasm"/>
    <property type="evidence" value="ECO:0000314"/>
    <property type="project" value="dictyBase"/>
</dbReference>
<dbReference type="GO" id="GO:0005635">
    <property type="term" value="C:nuclear envelope"/>
    <property type="evidence" value="ECO:0000314"/>
    <property type="project" value="dictyBase"/>
</dbReference>
<dbReference type="GO" id="GO:0005730">
    <property type="term" value="C:nucleolus"/>
    <property type="evidence" value="ECO:0000314"/>
    <property type="project" value="dictyBase"/>
</dbReference>
<dbReference type="GO" id="GO:0005634">
    <property type="term" value="C:nucleus"/>
    <property type="evidence" value="ECO:0000318"/>
    <property type="project" value="GO_Central"/>
</dbReference>
<dbReference type="GO" id="GO:0005524">
    <property type="term" value="F:ATP binding"/>
    <property type="evidence" value="ECO:0007669"/>
    <property type="project" value="UniProtKB-KW"/>
</dbReference>
<dbReference type="GO" id="GO:0009931">
    <property type="term" value="F:calcium-dependent protein serine/threonine kinase activity"/>
    <property type="evidence" value="ECO:0000318"/>
    <property type="project" value="GO_Central"/>
</dbReference>
<dbReference type="GO" id="GO:0004683">
    <property type="term" value="F:calcium/calmodulin-dependent protein kinase activity"/>
    <property type="evidence" value="ECO:0000318"/>
    <property type="project" value="GO_Central"/>
</dbReference>
<dbReference type="GO" id="GO:0005516">
    <property type="term" value="F:calmodulin binding"/>
    <property type="evidence" value="ECO:0000318"/>
    <property type="project" value="GO_Central"/>
</dbReference>
<dbReference type="GO" id="GO:0106310">
    <property type="term" value="F:protein serine kinase activity"/>
    <property type="evidence" value="ECO:0007669"/>
    <property type="project" value="RHEA"/>
</dbReference>
<dbReference type="GO" id="GO:0004674">
    <property type="term" value="F:protein serine/threonine kinase activity"/>
    <property type="evidence" value="ECO:0000250"/>
    <property type="project" value="dictyBase"/>
</dbReference>
<dbReference type="GO" id="GO:0006974">
    <property type="term" value="P:DNA damage response"/>
    <property type="evidence" value="ECO:0000250"/>
    <property type="project" value="dictyBase"/>
</dbReference>
<dbReference type="GO" id="GO:0035556">
    <property type="term" value="P:intracellular signal transduction"/>
    <property type="evidence" value="ECO:0000318"/>
    <property type="project" value="GO_Central"/>
</dbReference>
<dbReference type="CDD" id="cd05117">
    <property type="entry name" value="STKc_CAMK"/>
    <property type="match status" value="1"/>
</dbReference>
<dbReference type="FunFam" id="3.30.200.20:FF:000042">
    <property type="entry name" value="Aurora kinase A"/>
    <property type="match status" value="1"/>
</dbReference>
<dbReference type="FunFam" id="2.60.200.20:FF:000122">
    <property type="entry name" value="Probable serine/threonine-protein kinase fhkC"/>
    <property type="match status" value="1"/>
</dbReference>
<dbReference type="FunFam" id="1.10.510.10:FF:001010">
    <property type="entry name" value="Serine/threonine-protein kinase Chk2"/>
    <property type="match status" value="1"/>
</dbReference>
<dbReference type="Gene3D" id="2.60.200.20">
    <property type="match status" value="1"/>
</dbReference>
<dbReference type="Gene3D" id="1.10.510.10">
    <property type="entry name" value="Transferase(Phosphotransferase) domain 1"/>
    <property type="match status" value="1"/>
</dbReference>
<dbReference type="InterPro" id="IPR000253">
    <property type="entry name" value="FHA_dom"/>
</dbReference>
<dbReference type="InterPro" id="IPR011009">
    <property type="entry name" value="Kinase-like_dom_sf"/>
</dbReference>
<dbReference type="InterPro" id="IPR000719">
    <property type="entry name" value="Prot_kinase_dom"/>
</dbReference>
<dbReference type="InterPro" id="IPR017441">
    <property type="entry name" value="Protein_kinase_ATP_BS"/>
</dbReference>
<dbReference type="InterPro" id="IPR008271">
    <property type="entry name" value="Ser/Thr_kinase_AS"/>
</dbReference>
<dbReference type="InterPro" id="IPR008984">
    <property type="entry name" value="SMAD_FHA_dom_sf"/>
</dbReference>
<dbReference type="PANTHER" id="PTHR44167">
    <property type="entry name" value="OVARIAN-SPECIFIC SERINE/THREONINE-PROTEIN KINASE LOK-RELATED"/>
    <property type="match status" value="1"/>
</dbReference>
<dbReference type="PANTHER" id="PTHR44167:SF24">
    <property type="entry name" value="SERINE_THREONINE-PROTEIN KINASE CHK2"/>
    <property type="match status" value="1"/>
</dbReference>
<dbReference type="Pfam" id="PF00498">
    <property type="entry name" value="FHA"/>
    <property type="match status" value="1"/>
</dbReference>
<dbReference type="Pfam" id="PF00069">
    <property type="entry name" value="Pkinase"/>
    <property type="match status" value="1"/>
</dbReference>
<dbReference type="SMART" id="SM00240">
    <property type="entry name" value="FHA"/>
    <property type="match status" value="1"/>
</dbReference>
<dbReference type="SMART" id="SM00220">
    <property type="entry name" value="S_TKc"/>
    <property type="match status" value="1"/>
</dbReference>
<dbReference type="SUPFAM" id="SSF56112">
    <property type="entry name" value="Protein kinase-like (PK-like)"/>
    <property type="match status" value="1"/>
</dbReference>
<dbReference type="SUPFAM" id="SSF49879">
    <property type="entry name" value="SMAD/FHA domain"/>
    <property type="match status" value="1"/>
</dbReference>
<dbReference type="PROSITE" id="PS50006">
    <property type="entry name" value="FHA_DOMAIN"/>
    <property type="match status" value="1"/>
</dbReference>
<dbReference type="PROSITE" id="PS00107">
    <property type="entry name" value="PROTEIN_KINASE_ATP"/>
    <property type="match status" value="1"/>
</dbReference>
<dbReference type="PROSITE" id="PS50011">
    <property type="entry name" value="PROTEIN_KINASE_DOM"/>
    <property type="match status" value="1"/>
</dbReference>
<dbReference type="PROSITE" id="PS00108">
    <property type="entry name" value="PROTEIN_KINASE_ST"/>
    <property type="match status" value="1"/>
</dbReference>
<reference key="1">
    <citation type="journal article" date="2005" name="Nature">
        <title>The genome of the social amoeba Dictyostelium discoideum.</title>
        <authorList>
            <person name="Eichinger L."/>
            <person name="Pachebat J.A."/>
            <person name="Gloeckner G."/>
            <person name="Rajandream M.A."/>
            <person name="Sucgang R."/>
            <person name="Berriman M."/>
            <person name="Song J."/>
            <person name="Olsen R."/>
            <person name="Szafranski K."/>
            <person name="Xu Q."/>
            <person name="Tunggal B."/>
            <person name="Kummerfeld S."/>
            <person name="Madera M."/>
            <person name="Konfortov B.A."/>
            <person name="Rivero F."/>
            <person name="Bankier A.T."/>
            <person name="Lehmann R."/>
            <person name="Hamlin N."/>
            <person name="Davies R."/>
            <person name="Gaudet P."/>
            <person name="Fey P."/>
            <person name="Pilcher K."/>
            <person name="Chen G."/>
            <person name="Saunders D."/>
            <person name="Sodergren E.J."/>
            <person name="Davis P."/>
            <person name="Kerhornou A."/>
            <person name="Nie X."/>
            <person name="Hall N."/>
            <person name="Anjard C."/>
            <person name="Hemphill L."/>
            <person name="Bason N."/>
            <person name="Farbrother P."/>
            <person name="Desany B."/>
            <person name="Just E."/>
            <person name="Morio T."/>
            <person name="Rost R."/>
            <person name="Churcher C.M."/>
            <person name="Cooper J."/>
            <person name="Haydock S."/>
            <person name="van Driessche N."/>
            <person name="Cronin A."/>
            <person name="Goodhead I."/>
            <person name="Muzny D.M."/>
            <person name="Mourier T."/>
            <person name="Pain A."/>
            <person name="Lu M."/>
            <person name="Harper D."/>
            <person name="Lindsay R."/>
            <person name="Hauser H."/>
            <person name="James K.D."/>
            <person name="Quiles M."/>
            <person name="Madan Babu M."/>
            <person name="Saito T."/>
            <person name="Buchrieser C."/>
            <person name="Wardroper A."/>
            <person name="Felder M."/>
            <person name="Thangavelu M."/>
            <person name="Johnson D."/>
            <person name="Knights A."/>
            <person name="Loulseged H."/>
            <person name="Mungall K.L."/>
            <person name="Oliver K."/>
            <person name="Price C."/>
            <person name="Quail M.A."/>
            <person name="Urushihara H."/>
            <person name="Hernandez J."/>
            <person name="Rabbinowitsch E."/>
            <person name="Steffen D."/>
            <person name="Sanders M."/>
            <person name="Ma J."/>
            <person name="Kohara Y."/>
            <person name="Sharp S."/>
            <person name="Simmonds M.N."/>
            <person name="Spiegler S."/>
            <person name="Tivey A."/>
            <person name="Sugano S."/>
            <person name="White B."/>
            <person name="Walker D."/>
            <person name="Woodward J.R."/>
            <person name="Winckler T."/>
            <person name="Tanaka Y."/>
            <person name="Shaulsky G."/>
            <person name="Schleicher M."/>
            <person name="Weinstock G.M."/>
            <person name="Rosenthal A."/>
            <person name="Cox E.C."/>
            <person name="Chisholm R.L."/>
            <person name="Gibbs R.A."/>
            <person name="Loomis W.F."/>
            <person name="Platzer M."/>
            <person name="Kay R.R."/>
            <person name="Williams J.G."/>
            <person name="Dear P.H."/>
            <person name="Noegel A.A."/>
            <person name="Barrell B.G."/>
            <person name="Kuspa A."/>
        </authorList>
    </citation>
    <scope>NUCLEOTIDE SEQUENCE [LARGE SCALE GENOMIC DNA]</scope>
    <source>
        <strain>AX4</strain>
    </source>
</reference>
<proteinExistence type="inferred from homology"/>
<evidence type="ECO:0000255" key="1">
    <source>
        <dbReference type="PROSITE-ProRule" id="PRU00086"/>
    </source>
</evidence>
<evidence type="ECO:0000255" key="2">
    <source>
        <dbReference type="PROSITE-ProRule" id="PRU00159"/>
    </source>
</evidence>
<evidence type="ECO:0000255" key="3">
    <source>
        <dbReference type="PROSITE-ProRule" id="PRU10027"/>
    </source>
</evidence>
<evidence type="ECO:0000256" key="4">
    <source>
        <dbReference type="SAM" id="MobiDB-lite"/>
    </source>
</evidence>
<evidence type="ECO:0000305" key="5"/>
<feature type="chain" id="PRO_0000367466" description="Probable serine/threonine-protein kinase fhkA">
    <location>
        <begin position="1"/>
        <end position="593"/>
    </location>
</feature>
<feature type="domain" description="FHA" evidence="1">
    <location>
        <begin position="54"/>
        <end position="111"/>
    </location>
</feature>
<feature type="domain" description="Protein kinase" evidence="2">
    <location>
        <begin position="180"/>
        <end position="472"/>
    </location>
</feature>
<feature type="region of interest" description="Disordered" evidence="4">
    <location>
        <begin position="1"/>
        <end position="24"/>
    </location>
</feature>
<feature type="active site" description="Proton acceptor" evidence="2 3">
    <location>
        <position position="307"/>
    </location>
</feature>
<feature type="binding site" evidence="2">
    <location>
        <begin position="186"/>
        <end position="194"/>
    </location>
    <ligand>
        <name>ATP</name>
        <dbReference type="ChEBI" id="CHEBI:30616"/>
    </ligand>
</feature>
<feature type="binding site" evidence="2">
    <location>
        <position position="209"/>
    </location>
    <ligand>
        <name>ATP</name>
        <dbReference type="ChEBI" id="CHEBI:30616"/>
    </ligand>
</feature>
<comment type="catalytic activity">
    <reaction>
        <text>L-seryl-[protein] + ATP = O-phospho-L-seryl-[protein] + ADP + H(+)</text>
        <dbReference type="Rhea" id="RHEA:17989"/>
        <dbReference type="Rhea" id="RHEA-COMP:9863"/>
        <dbReference type="Rhea" id="RHEA-COMP:11604"/>
        <dbReference type="ChEBI" id="CHEBI:15378"/>
        <dbReference type="ChEBI" id="CHEBI:29999"/>
        <dbReference type="ChEBI" id="CHEBI:30616"/>
        <dbReference type="ChEBI" id="CHEBI:83421"/>
        <dbReference type="ChEBI" id="CHEBI:456216"/>
        <dbReference type="EC" id="2.7.11.1"/>
    </reaction>
</comment>
<comment type="catalytic activity">
    <reaction>
        <text>L-threonyl-[protein] + ATP = O-phospho-L-threonyl-[protein] + ADP + H(+)</text>
        <dbReference type="Rhea" id="RHEA:46608"/>
        <dbReference type="Rhea" id="RHEA-COMP:11060"/>
        <dbReference type="Rhea" id="RHEA-COMP:11605"/>
        <dbReference type="ChEBI" id="CHEBI:15378"/>
        <dbReference type="ChEBI" id="CHEBI:30013"/>
        <dbReference type="ChEBI" id="CHEBI:30616"/>
        <dbReference type="ChEBI" id="CHEBI:61977"/>
        <dbReference type="ChEBI" id="CHEBI:456216"/>
        <dbReference type="EC" id="2.7.11.1"/>
    </reaction>
</comment>
<comment type="similarity">
    <text evidence="5">Belongs to the protein kinase superfamily. CAMK Ser/Thr protein kinase family. CHK2 subfamily.</text>
</comment>
<gene>
    <name type="primary">fhkA</name>
    <name type="synonym">fhakA</name>
    <name type="ORF">DDB_G0293656</name>
</gene>